<sequence>MFNDIPVFDYEDIQLIPNKCIITSRSQADTSVTLGKYQFKLPVIPANMQTIIDETIAEQLAKEGYFYIMHRFDEDSRKPFIKRMHEQGLIASISVGVKACEYEFVTSLKEDAPEFITIDIAHGHANSVIDMIKHIKTELPETFVIAGNVGTPEAVRELENAGADATKVGIGPGKVCITKVKTGFGTGGWQLAALRWCAKAARKPIIADGGIRTHGDIAKSIRFGASMVMIGSLFAGHFESPGKTVEVDGETFKEYYGSASEYQKGEHKNVEGKKILLPTKGHLSDTLTEMQQDLQSSISYAGGKDLDSLRHVDYVIVKNSIWNGDSI</sequence>
<feature type="chain" id="PRO_0000093777" description="GMP reductase">
    <location>
        <begin position="1"/>
        <end position="327"/>
    </location>
</feature>
<feature type="active site" description="Thioimidate intermediate" evidence="1">
    <location>
        <position position="176"/>
    </location>
</feature>
<feature type="binding site" evidence="1">
    <location>
        <begin position="205"/>
        <end position="228"/>
    </location>
    <ligand>
        <name>NADP(+)</name>
        <dbReference type="ChEBI" id="CHEBI:58349"/>
    </ligand>
</feature>
<organism>
    <name type="scientific">Streptococcus pyogenes serotype M1</name>
    <dbReference type="NCBI Taxonomy" id="301447"/>
    <lineage>
        <taxon>Bacteria</taxon>
        <taxon>Bacillati</taxon>
        <taxon>Bacillota</taxon>
        <taxon>Bacilli</taxon>
        <taxon>Lactobacillales</taxon>
        <taxon>Streptococcaceae</taxon>
        <taxon>Streptococcus</taxon>
    </lineage>
</organism>
<gene>
    <name evidence="1" type="primary">guaC</name>
    <name type="ordered locus">SPy_1135</name>
    <name type="ordered locus">M5005_Spy0857</name>
</gene>
<keyword id="KW-0521">NADP</keyword>
<keyword id="KW-0560">Oxidoreductase</keyword>
<keyword id="KW-1185">Reference proteome</keyword>
<accession>Q99ZQ1</accession>
<accession>Q48YU7</accession>
<proteinExistence type="inferred from homology"/>
<dbReference type="EC" id="1.7.1.7" evidence="1"/>
<dbReference type="EMBL" id="AE004092">
    <property type="protein sequence ID" value="AAK34007.1"/>
    <property type="molecule type" value="Genomic_DNA"/>
</dbReference>
<dbReference type="EMBL" id="CP000017">
    <property type="protein sequence ID" value="AAZ51475.1"/>
    <property type="molecule type" value="Genomic_DNA"/>
</dbReference>
<dbReference type="RefSeq" id="NP_269286.1">
    <property type="nucleotide sequence ID" value="NC_002737.2"/>
</dbReference>
<dbReference type="SMR" id="Q99ZQ1"/>
<dbReference type="PaxDb" id="1314-HKU360_00919"/>
<dbReference type="KEGG" id="spy:SPy_1135"/>
<dbReference type="KEGG" id="spz:M5005_Spy0857"/>
<dbReference type="PATRIC" id="fig|160490.10.peg.988"/>
<dbReference type="HOGENOM" id="CLU_022552_5_0_9"/>
<dbReference type="OMA" id="AYKEYFG"/>
<dbReference type="Proteomes" id="UP000000750">
    <property type="component" value="Chromosome"/>
</dbReference>
<dbReference type="GO" id="GO:0005829">
    <property type="term" value="C:cytosol"/>
    <property type="evidence" value="ECO:0007669"/>
    <property type="project" value="TreeGrafter"/>
</dbReference>
<dbReference type="GO" id="GO:1902560">
    <property type="term" value="C:GMP reductase complex"/>
    <property type="evidence" value="ECO:0007669"/>
    <property type="project" value="InterPro"/>
</dbReference>
<dbReference type="GO" id="GO:0003920">
    <property type="term" value="F:GMP reductase activity"/>
    <property type="evidence" value="ECO:0007669"/>
    <property type="project" value="UniProtKB-UniRule"/>
</dbReference>
<dbReference type="GO" id="GO:0006163">
    <property type="term" value="P:purine nucleotide metabolic process"/>
    <property type="evidence" value="ECO:0007669"/>
    <property type="project" value="UniProtKB-UniRule"/>
</dbReference>
<dbReference type="CDD" id="cd00381">
    <property type="entry name" value="IMPDH"/>
    <property type="match status" value="1"/>
</dbReference>
<dbReference type="Gene3D" id="3.20.20.70">
    <property type="entry name" value="Aldolase class I"/>
    <property type="match status" value="1"/>
</dbReference>
<dbReference type="HAMAP" id="MF_01511">
    <property type="entry name" value="GMP_reduct_type2"/>
    <property type="match status" value="1"/>
</dbReference>
<dbReference type="InterPro" id="IPR013785">
    <property type="entry name" value="Aldolase_TIM"/>
</dbReference>
<dbReference type="InterPro" id="IPR050139">
    <property type="entry name" value="GMP_reductase"/>
</dbReference>
<dbReference type="InterPro" id="IPR005994">
    <property type="entry name" value="GuaC_type_2"/>
</dbReference>
<dbReference type="InterPro" id="IPR015875">
    <property type="entry name" value="IMP_DH/GMP_Rdtase_CS"/>
</dbReference>
<dbReference type="InterPro" id="IPR001093">
    <property type="entry name" value="IMP_DH_GMPRt"/>
</dbReference>
<dbReference type="NCBIfam" id="TIGR01306">
    <property type="entry name" value="GMP_reduct_2"/>
    <property type="match status" value="1"/>
</dbReference>
<dbReference type="NCBIfam" id="NF003966">
    <property type="entry name" value="PRK05458.1"/>
    <property type="match status" value="1"/>
</dbReference>
<dbReference type="PANTHER" id="PTHR43170">
    <property type="entry name" value="GMP REDUCTASE"/>
    <property type="match status" value="1"/>
</dbReference>
<dbReference type="PANTHER" id="PTHR43170:SF5">
    <property type="entry name" value="GMP REDUCTASE"/>
    <property type="match status" value="1"/>
</dbReference>
<dbReference type="Pfam" id="PF00478">
    <property type="entry name" value="IMPDH"/>
    <property type="match status" value="1"/>
</dbReference>
<dbReference type="PIRSF" id="PIRSF036500">
    <property type="entry name" value="GMP_red_Firmic"/>
    <property type="match status" value="1"/>
</dbReference>
<dbReference type="SMART" id="SM01240">
    <property type="entry name" value="IMPDH"/>
    <property type="match status" value="1"/>
</dbReference>
<dbReference type="SUPFAM" id="SSF51412">
    <property type="entry name" value="Inosine monophosphate dehydrogenase (IMPDH)"/>
    <property type="match status" value="1"/>
</dbReference>
<dbReference type="PROSITE" id="PS00487">
    <property type="entry name" value="IMP_DH_GMP_RED"/>
    <property type="match status" value="1"/>
</dbReference>
<name>GUAC_STRP1</name>
<comment type="function">
    <text evidence="1">Catalyzes the irreversible NADPH-dependent deamination of GMP to IMP. It functions in the conversion of nucleobase, nucleoside and nucleotide derivatives of G to A nucleotides, and in maintaining the intracellular balance of A and G nucleotides.</text>
</comment>
<comment type="catalytic activity">
    <reaction evidence="1">
        <text>IMP + NH4(+) + NADP(+) = GMP + NADPH + 2 H(+)</text>
        <dbReference type="Rhea" id="RHEA:17185"/>
        <dbReference type="ChEBI" id="CHEBI:15378"/>
        <dbReference type="ChEBI" id="CHEBI:28938"/>
        <dbReference type="ChEBI" id="CHEBI:57783"/>
        <dbReference type="ChEBI" id="CHEBI:58053"/>
        <dbReference type="ChEBI" id="CHEBI:58115"/>
        <dbReference type="ChEBI" id="CHEBI:58349"/>
        <dbReference type="EC" id="1.7.1.7"/>
    </reaction>
</comment>
<comment type="similarity">
    <text evidence="1">Belongs to the IMPDH/GMPR family. GuaC type 2 subfamily.</text>
</comment>
<reference key="1">
    <citation type="journal article" date="2001" name="Proc. Natl. Acad. Sci. U.S.A.">
        <title>Complete genome sequence of an M1 strain of Streptococcus pyogenes.</title>
        <authorList>
            <person name="Ferretti J.J."/>
            <person name="McShan W.M."/>
            <person name="Ajdic D.J."/>
            <person name="Savic D.J."/>
            <person name="Savic G."/>
            <person name="Lyon K."/>
            <person name="Primeaux C."/>
            <person name="Sezate S."/>
            <person name="Suvorov A.N."/>
            <person name="Kenton S."/>
            <person name="Lai H.S."/>
            <person name="Lin S.P."/>
            <person name="Qian Y."/>
            <person name="Jia H.G."/>
            <person name="Najar F.Z."/>
            <person name="Ren Q."/>
            <person name="Zhu H."/>
            <person name="Song L."/>
            <person name="White J."/>
            <person name="Yuan X."/>
            <person name="Clifton S.W."/>
            <person name="Roe B.A."/>
            <person name="McLaughlin R.E."/>
        </authorList>
    </citation>
    <scope>NUCLEOTIDE SEQUENCE [LARGE SCALE GENOMIC DNA]</scope>
    <source>
        <strain>ATCC 700294 / SF370 / Serotype M1</strain>
    </source>
</reference>
<reference key="2">
    <citation type="journal article" date="2005" name="J. Infect. Dis.">
        <title>Evolutionary origin and emergence of a highly successful clone of serotype M1 group A Streptococcus involved multiple horizontal gene transfer events.</title>
        <authorList>
            <person name="Sumby P."/>
            <person name="Porcella S.F."/>
            <person name="Madrigal A.G."/>
            <person name="Barbian K.D."/>
            <person name="Virtaneva K."/>
            <person name="Ricklefs S.M."/>
            <person name="Sturdevant D.E."/>
            <person name="Graham M.R."/>
            <person name="Vuopio-Varkila J."/>
            <person name="Hoe N.P."/>
            <person name="Musser J.M."/>
        </authorList>
    </citation>
    <scope>NUCLEOTIDE SEQUENCE [LARGE SCALE GENOMIC DNA]</scope>
    <source>
        <strain>ATCC BAA-947 / MGAS5005 / Serotype M1</strain>
    </source>
</reference>
<protein>
    <recommendedName>
        <fullName evidence="1">GMP reductase</fullName>
        <ecNumber evidence="1">1.7.1.7</ecNumber>
    </recommendedName>
    <alternativeName>
        <fullName evidence="1">Guanosine 5'-monophosphate oxidoreductase</fullName>
        <shortName evidence="1">Guanosine monophosphate reductase</shortName>
    </alternativeName>
</protein>
<evidence type="ECO:0000255" key="1">
    <source>
        <dbReference type="HAMAP-Rule" id="MF_01511"/>
    </source>
</evidence>